<name>AROC_SYNJA</name>
<keyword id="KW-0028">Amino-acid biosynthesis</keyword>
<keyword id="KW-0057">Aromatic amino acid biosynthesis</keyword>
<keyword id="KW-0274">FAD</keyword>
<keyword id="KW-0285">Flavoprotein</keyword>
<keyword id="KW-0288">FMN</keyword>
<keyword id="KW-0456">Lyase</keyword>
<keyword id="KW-0521">NADP</keyword>
<feature type="chain" id="PRO_0000256351" description="Chorismate synthase">
    <location>
        <begin position="1"/>
        <end position="378"/>
    </location>
</feature>
<feature type="binding site" evidence="1">
    <location>
        <position position="49"/>
    </location>
    <ligand>
        <name>NADP(+)</name>
        <dbReference type="ChEBI" id="CHEBI:58349"/>
    </ligand>
</feature>
<feature type="binding site" evidence="1">
    <location>
        <begin position="126"/>
        <end position="128"/>
    </location>
    <ligand>
        <name>FMN</name>
        <dbReference type="ChEBI" id="CHEBI:58210"/>
    </ligand>
</feature>
<feature type="binding site" evidence="1">
    <location>
        <position position="287"/>
    </location>
    <ligand>
        <name>FMN</name>
        <dbReference type="ChEBI" id="CHEBI:58210"/>
    </ligand>
</feature>
<feature type="binding site" evidence="1">
    <location>
        <begin position="302"/>
        <end position="306"/>
    </location>
    <ligand>
        <name>FMN</name>
        <dbReference type="ChEBI" id="CHEBI:58210"/>
    </ligand>
</feature>
<feature type="binding site" evidence="1">
    <location>
        <position position="328"/>
    </location>
    <ligand>
        <name>FMN</name>
        <dbReference type="ChEBI" id="CHEBI:58210"/>
    </ligand>
</feature>
<accession>Q2JXD0</accession>
<organism>
    <name type="scientific">Synechococcus sp. (strain JA-3-3Ab)</name>
    <name type="common">Cyanobacteria bacterium Yellowstone A-Prime</name>
    <dbReference type="NCBI Taxonomy" id="321327"/>
    <lineage>
        <taxon>Bacteria</taxon>
        <taxon>Bacillati</taxon>
        <taxon>Cyanobacteriota</taxon>
        <taxon>Cyanophyceae</taxon>
        <taxon>Synechococcales</taxon>
        <taxon>Synechococcaceae</taxon>
        <taxon>Synechococcus</taxon>
    </lineage>
</organism>
<dbReference type="EC" id="4.2.3.5" evidence="1"/>
<dbReference type="EMBL" id="CP000239">
    <property type="protein sequence ID" value="ABC98556.1"/>
    <property type="molecule type" value="Genomic_DNA"/>
</dbReference>
<dbReference type="RefSeq" id="WP_011429245.1">
    <property type="nucleotide sequence ID" value="NC_007775.1"/>
</dbReference>
<dbReference type="SMR" id="Q2JXD0"/>
<dbReference type="STRING" id="321327.CYA_0336"/>
<dbReference type="KEGG" id="cya:CYA_0336"/>
<dbReference type="eggNOG" id="COG0082">
    <property type="taxonomic scope" value="Bacteria"/>
</dbReference>
<dbReference type="HOGENOM" id="CLU_034547_0_1_3"/>
<dbReference type="OrthoDB" id="9771806at2"/>
<dbReference type="UniPathway" id="UPA00053">
    <property type="reaction ID" value="UER00090"/>
</dbReference>
<dbReference type="Proteomes" id="UP000008818">
    <property type="component" value="Chromosome"/>
</dbReference>
<dbReference type="GO" id="GO:0005829">
    <property type="term" value="C:cytosol"/>
    <property type="evidence" value="ECO:0007669"/>
    <property type="project" value="TreeGrafter"/>
</dbReference>
<dbReference type="GO" id="GO:0004107">
    <property type="term" value="F:chorismate synthase activity"/>
    <property type="evidence" value="ECO:0007669"/>
    <property type="project" value="UniProtKB-UniRule"/>
</dbReference>
<dbReference type="GO" id="GO:0010181">
    <property type="term" value="F:FMN binding"/>
    <property type="evidence" value="ECO:0007669"/>
    <property type="project" value="TreeGrafter"/>
</dbReference>
<dbReference type="GO" id="GO:0008652">
    <property type="term" value="P:amino acid biosynthetic process"/>
    <property type="evidence" value="ECO:0007669"/>
    <property type="project" value="UniProtKB-KW"/>
</dbReference>
<dbReference type="GO" id="GO:0009073">
    <property type="term" value="P:aromatic amino acid family biosynthetic process"/>
    <property type="evidence" value="ECO:0007669"/>
    <property type="project" value="UniProtKB-KW"/>
</dbReference>
<dbReference type="GO" id="GO:0009423">
    <property type="term" value="P:chorismate biosynthetic process"/>
    <property type="evidence" value="ECO:0007669"/>
    <property type="project" value="UniProtKB-UniRule"/>
</dbReference>
<dbReference type="CDD" id="cd07304">
    <property type="entry name" value="Chorismate_synthase"/>
    <property type="match status" value="1"/>
</dbReference>
<dbReference type="FunFam" id="3.60.150.10:FF:000003">
    <property type="entry name" value="Chorismate synthase"/>
    <property type="match status" value="1"/>
</dbReference>
<dbReference type="Gene3D" id="3.60.150.10">
    <property type="entry name" value="Chorismate synthase AroC"/>
    <property type="match status" value="1"/>
</dbReference>
<dbReference type="HAMAP" id="MF_00300">
    <property type="entry name" value="Chorismate_synth"/>
    <property type="match status" value="1"/>
</dbReference>
<dbReference type="InterPro" id="IPR000453">
    <property type="entry name" value="Chorismate_synth"/>
</dbReference>
<dbReference type="InterPro" id="IPR035904">
    <property type="entry name" value="Chorismate_synth_AroC_sf"/>
</dbReference>
<dbReference type="InterPro" id="IPR020541">
    <property type="entry name" value="Chorismate_synthase_CS"/>
</dbReference>
<dbReference type="NCBIfam" id="TIGR00033">
    <property type="entry name" value="aroC"/>
    <property type="match status" value="1"/>
</dbReference>
<dbReference type="NCBIfam" id="NF003793">
    <property type="entry name" value="PRK05382.1"/>
    <property type="match status" value="1"/>
</dbReference>
<dbReference type="PANTHER" id="PTHR21085">
    <property type="entry name" value="CHORISMATE SYNTHASE"/>
    <property type="match status" value="1"/>
</dbReference>
<dbReference type="PANTHER" id="PTHR21085:SF0">
    <property type="entry name" value="CHORISMATE SYNTHASE"/>
    <property type="match status" value="1"/>
</dbReference>
<dbReference type="Pfam" id="PF01264">
    <property type="entry name" value="Chorismate_synt"/>
    <property type="match status" value="1"/>
</dbReference>
<dbReference type="PIRSF" id="PIRSF001456">
    <property type="entry name" value="Chorismate_synth"/>
    <property type="match status" value="1"/>
</dbReference>
<dbReference type="SUPFAM" id="SSF103263">
    <property type="entry name" value="Chorismate synthase, AroC"/>
    <property type="match status" value="1"/>
</dbReference>
<dbReference type="PROSITE" id="PS00787">
    <property type="entry name" value="CHORISMATE_SYNTHASE_1"/>
    <property type="match status" value="1"/>
</dbReference>
<dbReference type="PROSITE" id="PS00788">
    <property type="entry name" value="CHORISMATE_SYNTHASE_2"/>
    <property type="match status" value="1"/>
</dbReference>
<dbReference type="PROSITE" id="PS00789">
    <property type="entry name" value="CHORISMATE_SYNTHASE_3"/>
    <property type="match status" value="1"/>
</dbReference>
<reference key="1">
    <citation type="journal article" date="2007" name="ISME J.">
        <title>Population level functional diversity in a microbial community revealed by comparative genomic and metagenomic analyses.</title>
        <authorList>
            <person name="Bhaya D."/>
            <person name="Grossman A.R."/>
            <person name="Steunou A.-S."/>
            <person name="Khuri N."/>
            <person name="Cohan F.M."/>
            <person name="Hamamura N."/>
            <person name="Melendrez M.C."/>
            <person name="Bateson M.M."/>
            <person name="Ward D.M."/>
            <person name="Heidelberg J.F."/>
        </authorList>
    </citation>
    <scope>NUCLEOTIDE SEQUENCE [LARGE SCALE GENOMIC DNA]</scope>
    <source>
        <strain>JA-3-3Ab</strain>
    </source>
</reference>
<protein>
    <recommendedName>
        <fullName evidence="1">Chorismate synthase</fullName>
        <shortName evidence="1">CS</shortName>
        <ecNumber evidence="1">4.2.3.5</ecNumber>
    </recommendedName>
    <alternativeName>
        <fullName evidence="1">5-enolpyruvylshikimate-3-phosphate phospholyase</fullName>
    </alternativeName>
</protein>
<proteinExistence type="inferred from homology"/>
<evidence type="ECO:0000255" key="1">
    <source>
        <dbReference type="HAMAP-Rule" id="MF_00300"/>
    </source>
</evidence>
<gene>
    <name evidence="1" type="primary">aroC</name>
    <name type="ordered locus">CYA_0336</name>
</gene>
<sequence length="378" mass="40328">MANGNSFGVLFCVTTYGESHGGAVGVVVDGCPPRLPLSEADIQAELDRRRPGQSHITTPRQEADRCQILSGVFQGFTLGTPIHILVRNQDARPQDYSEMATTFRPSHADATYQAKYGIRNWQGGGRASARETIGRVAAGAIAKKILRLAAGVEILAYVQRVQDVEAQVDPSSVTAEQVEANIVRCPDPAAAAAMIEKIEAAAREGDSLGGVVECVARNVPRGLGCPVFDKLEADLAKAVMSLPASKGFEIGSGFAGTYLTGKQHNDEFYMTPSGWRTRSNRSGGIQGGISNGEDIVLRVAFKPTATIRQPQSTVTLDGQETVLAARGRHDPCVLPRAVPMVEAMVALVLCDHLLRHHAQCRSLALPEVPIPAVPLPHS</sequence>
<comment type="function">
    <text evidence="1">Catalyzes the anti-1,4-elimination of the C-3 phosphate and the C-6 proR hydrogen from 5-enolpyruvylshikimate-3-phosphate (EPSP) to yield chorismate, which is the branch point compound that serves as the starting substrate for the three terminal pathways of aromatic amino acid biosynthesis. This reaction introduces a second double bond into the aromatic ring system.</text>
</comment>
<comment type="catalytic activity">
    <reaction evidence="1">
        <text>5-O-(1-carboxyvinyl)-3-phosphoshikimate = chorismate + phosphate</text>
        <dbReference type="Rhea" id="RHEA:21020"/>
        <dbReference type="ChEBI" id="CHEBI:29748"/>
        <dbReference type="ChEBI" id="CHEBI:43474"/>
        <dbReference type="ChEBI" id="CHEBI:57701"/>
        <dbReference type="EC" id="4.2.3.5"/>
    </reaction>
</comment>
<comment type="cofactor">
    <cofactor evidence="1">
        <name>FMNH2</name>
        <dbReference type="ChEBI" id="CHEBI:57618"/>
    </cofactor>
    <text evidence="1">Reduced FMN (FMNH(2)).</text>
</comment>
<comment type="pathway">
    <text evidence="1">Metabolic intermediate biosynthesis; chorismate biosynthesis; chorismate from D-erythrose 4-phosphate and phosphoenolpyruvate: step 7/7.</text>
</comment>
<comment type="subunit">
    <text evidence="1">Homotetramer.</text>
</comment>
<comment type="similarity">
    <text evidence="1">Belongs to the chorismate synthase family.</text>
</comment>